<dbReference type="EMBL" id="AF200496">
    <property type="protein sequence ID" value="AAF69252.1"/>
    <property type="molecule type" value="mRNA"/>
</dbReference>
<dbReference type="EMBL" id="AF167368">
    <property type="protein sequence ID" value="AAG29344.1"/>
    <property type="molecule type" value="mRNA"/>
</dbReference>
<dbReference type="EMBL" id="AF251118">
    <property type="protein sequence ID" value="AAG14420.1"/>
    <property type="molecule type" value="mRNA"/>
</dbReference>
<dbReference type="EMBL" id="AF251119">
    <property type="protein sequence ID" value="AAG14421.1"/>
    <property type="molecule type" value="mRNA"/>
</dbReference>
<dbReference type="EMBL" id="AF251120">
    <property type="protein sequence ID" value="AAG14422.1"/>
    <property type="molecule type" value="mRNA"/>
</dbReference>
<dbReference type="EMBL" id="AF201832">
    <property type="protein sequence ID" value="AAF25212.1"/>
    <property type="molecule type" value="mRNA"/>
</dbReference>
<dbReference type="EMBL" id="AY071840">
    <property type="protein sequence ID" value="AAL67151.1"/>
    <property type="molecule type" value="mRNA"/>
</dbReference>
<dbReference type="EMBL" id="AY071841">
    <property type="protein sequence ID" value="AAL67154.1"/>
    <property type="molecule type" value="mRNA"/>
</dbReference>
<dbReference type="EMBL" id="AY973625">
    <property type="protein sequence ID" value="AAX59036.1"/>
    <property type="molecule type" value="Genomic_DNA"/>
</dbReference>
<dbReference type="EMBL" id="AB451333">
    <property type="protein sequence ID" value="BAG70147.1"/>
    <property type="molecule type" value="mRNA"/>
</dbReference>
<dbReference type="EMBL" id="AB451478">
    <property type="protein sequence ID" value="BAG70292.1"/>
    <property type="molecule type" value="mRNA"/>
</dbReference>
<dbReference type="EMBL" id="AC079753">
    <property type="protein sequence ID" value="AAX88889.1"/>
    <property type="molecule type" value="Genomic_DNA"/>
</dbReference>
<dbReference type="EMBL" id="CH471217">
    <property type="protein sequence ID" value="EAW73609.1"/>
    <property type="molecule type" value="Genomic_DNA"/>
</dbReference>
<dbReference type="EMBL" id="BC020637">
    <property type="protein sequence ID" value="AAH20637.1"/>
    <property type="molecule type" value="mRNA"/>
</dbReference>
<dbReference type="CCDS" id="CCDS2103.1">
    <molecule id="Q9NZH6-1"/>
</dbReference>
<dbReference type="CCDS" id="CCDS2104.1">
    <molecule id="Q9NZH6-4"/>
</dbReference>
<dbReference type="CCDS" id="CCDS2105.1">
    <molecule id="Q9NZH6-5"/>
</dbReference>
<dbReference type="CCDS" id="CCDS2106.1">
    <molecule id="Q9NZH6-3"/>
</dbReference>
<dbReference type="CCDS" id="CCDS2107.1">
    <molecule id="Q9NZH6-2"/>
</dbReference>
<dbReference type="RefSeq" id="NP_055254.2">
    <molecule id="Q9NZH6-1"/>
    <property type="nucleotide sequence ID" value="NM_014439.3"/>
</dbReference>
<dbReference type="RefSeq" id="NP_775294.1">
    <molecule id="Q9NZH6-4"/>
    <property type="nucleotide sequence ID" value="NM_173202.2"/>
</dbReference>
<dbReference type="RefSeq" id="NP_775295.1">
    <molecule id="Q9NZH6-5"/>
    <property type="nucleotide sequence ID" value="NM_173203.2"/>
</dbReference>
<dbReference type="RefSeq" id="NP_775296.1">
    <molecule id="Q9NZH6-3"/>
    <property type="nucleotide sequence ID" value="NM_173204.2"/>
</dbReference>
<dbReference type="RefSeq" id="NP_775297.1">
    <molecule id="Q9NZH6-2"/>
    <property type="nucleotide sequence ID" value="NM_173205.2"/>
</dbReference>
<dbReference type="RefSeq" id="XP_011509265.1">
    <property type="nucleotide sequence ID" value="XM_011510963.2"/>
</dbReference>
<dbReference type="RefSeq" id="XP_011509266.1">
    <property type="nucleotide sequence ID" value="XM_011510964.2"/>
</dbReference>
<dbReference type="PDB" id="5HN1">
    <property type="method" value="X-ray"/>
    <property type="resolution" value="2.25 A"/>
    <property type="chains" value="A/B=46-218"/>
</dbReference>
<dbReference type="PDB" id="6NCU">
    <property type="method" value="X-ray"/>
    <property type="resolution" value="3.50 A"/>
    <property type="chains" value="A/B=53-206"/>
</dbReference>
<dbReference type="PDBsum" id="5HN1"/>
<dbReference type="PDBsum" id="6NCU"/>
<dbReference type="SMR" id="Q9NZH6"/>
<dbReference type="BioGRID" id="118054">
    <property type="interactions" value="40"/>
</dbReference>
<dbReference type="ComplexPortal" id="CPX-10344">
    <molecule id="Q9NZH6-1"/>
    <property type="entry name" value="Interleukin-37 receptor-ligand complex"/>
</dbReference>
<dbReference type="ComplexPortal" id="CPX-10345">
    <property type="entry name" value="IL37-SMAD3 transcriptional repressor complex"/>
</dbReference>
<dbReference type="ComplexPortal" id="CPX-10348">
    <property type="entry name" value="Interleukin-37 complex"/>
</dbReference>
<dbReference type="FunCoup" id="Q9NZH6">
    <property type="interactions" value="358"/>
</dbReference>
<dbReference type="IntAct" id="Q9NZH6">
    <property type="interactions" value="28"/>
</dbReference>
<dbReference type="STRING" id="9606.ENSP00000263326"/>
<dbReference type="iPTMnet" id="Q9NZH6"/>
<dbReference type="PhosphoSitePlus" id="Q9NZH6"/>
<dbReference type="BioMuta" id="IL37"/>
<dbReference type="DMDM" id="25008593"/>
<dbReference type="MassIVE" id="Q9NZH6"/>
<dbReference type="PaxDb" id="9606-ENSP00000263326"/>
<dbReference type="PeptideAtlas" id="Q9NZH6"/>
<dbReference type="ProteomicsDB" id="83390">
    <molecule id="Q9NZH6-1"/>
</dbReference>
<dbReference type="ProteomicsDB" id="83391">
    <molecule id="Q9NZH6-2"/>
</dbReference>
<dbReference type="ProteomicsDB" id="83392">
    <molecule id="Q9NZH6-3"/>
</dbReference>
<dbReference type="ProteomicsDB" id="83393">
    <molecule id="Q9NZH6-4"/>
</dbReference>
<dbReference type="ProteomicsDB" id="83394">
    <molecule id="Q9NZH6-5"/>
</dbReference>
<dbReference type="Antibodypedia" id="33300">
    <property type="antibodies" value="331 antibodies from 33 providers"/>
</dbReference>
<dbReference type="DNASU" id="27178"/>
<dbReference type="Ensembl" id="ENST00000263326.8">
    <molecule id="Q9NZH6-1"/>
    <property type="protein sequence ID" value="ENSP00000263326.3"/>
    <property type="gene ID" value="ENSG00000125571.10"/>
</dbReference>
<dbReference type="Ensembl" id="ENST00000311328.2">
    <molecule id="Q9NZH6-2"/>
    <property type="protein sequence ID" value="ENSP00000309883.2"/>
    <property type="gene ID" value="ENSG00000125571.10"/>
</dbReference>
<dbReference type="Ensembl" id="ENST00000349806.7">
    <molecule id="Q9NZH6-5"/>
    <property type="protein sequence ID" value="ENSP00000263328.3"/>
    <property type="gene ID" value="ENSG00000125571.10"/>
</dbReference>
<dbReference type="Ensembl" id="ENST00000352179.7">
    <molecule id="Q9NZH6-4"/>
    <property type="protein sequence ID" value="ENSP00000263327.3"/>
    <property type="gene ID" value="ENSG00000125571.10"/>
</dbReference>
<dbReference type="Ensembl" id="ENST00000353225.7">
    <molecule id="Q9NZH6-3"/>
    <property type="protein sequence ID" value="ENSP00000309208.3"/>
    <property type="gene ID" value="ENSG00000125571.10"/>
</dbReference>
<dbReference type="GeneID" id="27178"/>
<dbReference type="KEGG" id="hsa:27178"/>
<dbReference type="MANE-Select" id="ENST00000263326.8">
    <property type="protein sequence ID" value="ENSP00000263326.3"/>
    <property type="RefSeq nucleotide sequence ID" value="NM_014439.4"/>
    <property type="RefSeq protein sequence ID" value="NP_055254.2"/>
</dbReference>
<dbReference type="UCSC" id="uc002tij.4">
    <molecule id="Q9NZH6-1"/>
    <property type="organism name" value="human"/>
</dbReference>
<dbReference type="AGR" id="HGNC:15563"/>
<dbReference type="CTD" id="27178"/>
<dbReference type="DisGeNET" id="27178"/>
<dbReference type="GeneCards" id="IL37"/>
<dbReference type="HGNC" id="HGNC:15563">
    <property type="gene designation" value="IL37"/>
</dbReference>
<dbReference type="HPA" id="ENSG00000125571">
    <property type="expression patterns" value="Tissue enriched (skin)"/>
</dbReference>
<dbReference type="MalaCards" id="IL37"/>
<dbReference type="MIM" id="605510">
    <property type="type" value="gene"/>
</dbReference>
<dbReference type="MIM" id="619398">
    <property type="type" value="phenotype"/>
</dbReference>
<dbReference type="neXtProt" id="NX_Q9NZH6"/>
<dbReference type="OpenTargets" id="ENSG00000125571"/>
<dbReference type="PharmGKB" id="PA38390"/>
<dbReference type="VEuPathDB" id="HostDB:ENSG00000125571"/>
<dbReference type="eggNOG" id="ENOG502TCXA">
    <property type="taxonomic scope" value="Eukaryota"/>
</dbReference>
<dbReference type="GeneTree" id="ENSGT00950000182943"/>
<dbReference type="HOGENOM" id="CLU_095373_0_0_1"/>
<dbReference type="InParanoid" id="Q9NZH6"/>
<dbReference type="OMA" id="HAGPRVK"/>
<dbReference type="OrthoDB" id="9449069at2759"/>
<dbReference type="PAN-GO" id="Q9NZH6">
    <property type="GO annotations" value="7 GO annotations based on evolutionary models"/>
</dbReference>
<dbReference type="PhylomeDB" id="Q9NZH6"/>
<dbReference type="TreeFam" id="TF300203"/>
<dbReference type="PathwayCommons" id="Q9NZH6"/>
<dbReference type="Reactome" id="R-HSA-9008059">
    <property type="pathway name" value="Interleukin-37 signaling"/>
</dbReference>
<dbReference type="Reactome" id="R-HSA-9012546">
    <property type="pathway name" value="Interleukin-18 signaling"/>
</dbReference>
<dbReference type="SignaLink" id="Q9NZH6"/>
<dbReference type="BioGRID-ORCS" id="27178">
    <property type="hits" value="8 hits in 1139 CRISPR screens"/>
</dbReference>
<dbReference type="GeneWiki" id="IL1F7"/>
<dbReference type="GenomeRNAi" id="27178"/>
<dbReference type="Pharos" id="Q9NZH6">
    <property type="development level" value="Tbio"/>
</dbReference>
<dbReference type="PRO" id="PR:Q9NZH6"/>
<dbReference type="Proteomes" id="UP000005640">
    <property type="component" value="Chromosome 2"/>
</dbReference>
<dbReference type="RNAct" id="Q9NZH6">
    <property type="molecule type" value="protein"/>
</dbReference>
<dbReference type="Bgee" id="ENSG00000125571">
    <property type="expression patterns" value="Expressed in upper arm skin and 120 other cell types or tissues"/>
</dbReference>
<dbReference type="GO" id="GO:0005829">
    <property type="term" value="C:cytosol"/>
    <property type="evidence" value="ECO:0000314"/>
    <property type="project" value="HPA"/>
</dbReference>
<dbReference type="GO" id="GO:0005576">
    <property type="term" value="C:extracellular region"/>
    <property type="evidence" value="ECO:0000304"/>
    <property type="project" value="UniProtKB"/>
</dbReference>
<dbReference type="GO" id="GO:0005615">
    <property type="term" value="C:extracellular space"/>
    <property type="evidence" value="ECO:0000318"/>
    <property type="project" value="GO_Central"/>
</dbReference>
<dbReference type="GO" id="GO:0043231">
    <property type="term" value="C:intracellular membrane-bounded organelle"/>
    <property type="evidence" value="ECO:0000314"/>
    <property type="project" value="HPA"/>
</dbReference>
<dbReference type="GO" id="GO:0005654">
    <property type="term" value="C:nucleoplasm"/>
    <property type="evidence" value="ECO:0000314"/>
    <property type="project" value="HPA"/>
</dbReference>
<dbReference type="GO" id="GO:0005125">
    <property type="term" value="F:cytokine activity"/>
    <property type="evidence" value="ECO:0000318"/>
    <property type="project" value="GO_Central"/>
</dbReference>
<dbReference type="GO" id="GO:0042802">
    <property type="term" value="F:identical protein binding"/>
    <property type="evidence" value="ECO:0000353"/>
    <property type="project" value="IntAct"/>
</dbReference>
<dbReference type="GO" id="GO:0005149">
    <property type="term" value="F:interleukin-1 receptor binding"/>
    <property type="evidence" value="ECO:0000304"/>
    <property type="project" value="UniProtKB"/>
</dbReference>
<dbReference type="GO" id="GO:0071222">
    <property type="term" value="P:cellular response to lipopolysaccharide"/>
    <property type="evidence" value="ECO:0000318"/>
    <property type="project" value="GO_Central"/>
</dbReference>
<dbReference type="GO" id="GO:0019221">
    <property type="term" value="P:cytokine-mediated signaling pathway"/>
    <property type="evidence" value="ECO:0000318"/>
    <property type="project" value="GO_Central"/>
</dbReference>
<dbReference type="GO" id="GO:0006955">
    <property type="term" value="P:immune response"/>
    <property type="evidence" value="ECO:0000318"/>
    <property type="project" value="GO_Central"/>
</dbReference>
<dbReference type="GO" id="GO:0006954">
    <property type="term" value="P:inflammatory response"/>
    <property type="evidence" value="ECO:0000318"/>
    <property type="project" value="GO_Central"/>
</dbReference>
<dbReference type="GO" id="GO:0032715">
    <property type="term" value="P:negative regulation of interleukin-6 production"/>
    <property type="evidence" value="ECO:0000316"/>
    <property type="project" value="ARUK-UCL"/>
</dbReference>
<dbReference type="GO" id="GO:0032720">
    <property type="term" value="P:negative regulation of tumor necrosis factor production"/>
    <property type="evidence" value="ECO:0000315"/>
    <property type="project" value="UniProtKB"/>
</dbReference>
<dbReference type="GO" id="GO:0050727">
    <property type="term" value="P:regulation of inflammatory response"/>
    <property type="evidence" value="ECO:0000316"/>
    <property type="project" value="ARUK-UCL"/>
</dbReference>
<dbReference type="CDD" id="cd23301">
    <property type="entry name" value="beta-trefoil_IL37"/>
    <property type="match status" value="1"/>
</dbReference>
<dbReference type="FunFam" id="2.80.10.50:FF:000013">
    <property type="entry name" value="Interleukin-1"/>
    <property type="match status" value="1"/>
</dbReference>
<dbReference type="Gene3D" id="2.80.10.50">
    <property type="match status" value="1"/>
</dbReference>
<dbReference type="InterPro" id="IPR000975">
    <property type="entry name" value="IL-1_fam"/>
</dbReference>
<dbReference type="InterPro" id="IPR003297">
    <property type="entry name" value="IL-1RA/IL-36"/>
</dbReference>
<dbReference type="InterPro" id="IPR008996">
    <property type="entry name" value="IL1/FGF"/>
</dbReference>
<dbReference type="PANTHER" id="PTHR10078">
    <property type="entry name" value="INTERLEUKIN-1 FAMILY MEMBER"/>
    <property type="match status" value="1"/>
</dbReference>
<dbReference type="PANTHER" id="PTHR10078:SF31">
    <property type="entry name" value="INTERLEUKIN-37"/>
    <property type="match status" value="1"/>
</dbReference>
<dbReference type="Pfam" id="PF00340">
    <property type="entry name" value="IL1"/>
    <property type="match status" value="1"/>
</dbReference>
<dbReference type="PRINTS" id="PR00264">
    <property type="entry name" value="INTERLEUKIN1"/>
</dbReference>
<dbReference type="PRINTS" id="PR01360">
    <property type="entry name" value="INTRLEUKIN1X"/>
</dbReference>
<dbReference type="SMART" id="SM00125">
    <property type="entry name" value="IL1"/>
    <property type="match status" value="1"/>
</dbReference>
<dbReference type="SUPFAM" id="SSF50353">
    <property type="entry name" value="Cytokine"/>
    <property type="match status" value="1"/>
</dbReference>
<evidence type="ECO:0000256" key="1">
    <source>
        <dbReference type="SAM" id="MobiDB-lite"/>
    </source>
</evidence>
<evidence type="ECO:0000269" key="2">
    <source>
    </source>
</evidence>
<evidence type="ECO:0000269" key="3">
    <source>
    </source>
</evidence>
<evidence type="ECO:0000269" key="4">
    <source>
    </source>
</evidence>
<evidence type="ECO:0000269" key="5">
    <source>
    </source>
</evidence>
<evidence type="ECO:0000269" key="6">
    <source>
    </source>
</evidence>
<evidence type="ECO:0000269" key="7">
    <source>
    </source>
</evidence>
<evidence type="ECO:0000269" key="8">
    <source ref="6"/>
</evidence>
<evidence type="ECO:0000303" key="9">
    <source>
    </source>
</evidence>
<evidence type="ECO:0000303" key="10">
    <source>
    </source>
</evidence>
<evidence type="ECO:0000303" key="11">
    <source>
    </source>
</evidence>
<evidence type="ECO:0000303" key="12">
    <source>
    </source>
</evidence>
<evidence type="ECO:0000305" key="13"/>
<evidence type="ECO:0000305" key="14">
    <source>
    </source>
</evidence>
<evidence type="ECO:0000312" key="15">
    <source>
        <dbReference type="HGNC" id="HGNC:15563"/>
    </source>
</evidence>
<evidence type="ECO:0007829" key="16">
    <source>
        <dbReference type="PDB" id="5HN1"/>
    </source>
</evidence>
<evidence type="ECO:0007829" key="17">
    <source>
        <dbReference type="PDB" id="6NCU"/>
    </source>
</evidence>
<name>IL37_HUMAN</name>
<comment type="function">
    <text evidence="4 5 7">Immune regulatory cytokine that acts as a suppressor of innate inflammatory and immune responses involved in curbing excessive inflammation. Signaling can occur via two mechanisms, intracellularly through nuclear translocation with SMAD3 and extracellularly after secretion and binding to its receptor composed of IL18R1 and IL18RAP. Suppresses, or reduces, pro-inflammatory cytokine production, including IL1A and IL6, as well as CCL12, CSF1, CSF2, CXCL13, IL1B, IL23A and IL1RN, but spares anti-inflammatory cytokines. Inhibits dendritic cell activation.</text>
</comment>
<comment type="subunit">
    <text evidence="2 5 6">Interacts with SMAD3. Binds IL18R1, but not to IL1R1, with lower affinity than IL18, and does not seem to act as a receptor antagonist for IL18. Interacts with cargo receptor TMED10; the interaction mediates the translocation from the cytoplasm into the ERGIC (endoplasmic reticulum-Golgi intermediate compartment) and thereby secretion (PubMed:32272059).</text>
</comment>
<comment type="interaction">
    <interactant intactId="EBI-3862125">
        <id>Q9NZH6</id>
    </interactant>
    <interactant intactId="EBI-25837549">
        <id>P28329-3</id>
        <label>CHAT</label>
    </interactant>
    <organismsDiffer>false</organismsDiffer>
    <experiments>3</experiments>
</comment>
<comment type="interaction">
    <interactant intactId="EBI-3862125">
        <id>Q9NZH6</id>
    </interactant>
    <interactant intactId="EBI-348399">
        <id>P22607</id>
        <label>FGFR3</label>
    </interactant>
    <organismsDiffer>false</organismsDiffer>
    <experiments>3</experiments>
</comment>
<comment type="interaction">
    <interactant intactId="EBI-3862125">
        <id>Q9NZH6</id>
    </interactant>
    <interactant intactId="EBI-8285963">
        <id>Q14957</id>
        <label>GRIN2C</label>
    </interactant>
    <organismsDiffer>false</organismsDiffer>
    <experiments>3</experiments>
</comment>
<comment type="interaction">
    <interactant intactId="EBI-3862125">
        <id>Q9NZH6</id>
    </interactant>
    <interactant intactId="EBI-351506">
        <id>P06396</id>
        <label>GSN</label>
    </interactant>
    <organismsDiffer>false</organismsDiffer>
    <experiments>3</experiments>
</comment>
<comment type="interaction">
    <interactant intactId="EBI-3862125">
        <id>Q9NZH6</id>
    </interactant>
    <interactant intactId="EBI-1053424">
        <id>O43741</id>
        <label>PRKAB2</label>
    </interactant>
    <organismsDiffer>false</organismsDiffer>
    <experiments>5</experiments>
</comment>
<comment type="interaction">
    <interactant intactId="EBI-3862125">
        <id>Q9NZH6</id>
    </interactant>
    <interactant intactId="EBI-741480">
        <id>Q9UMX0</id>
        <label>UBQLN1</label>
    </interactant>
    <organismsDiffer>false</organismsDiffer>
    <experiments>3</experiments>
</comment>
<comment type="interaction">
    <interactant intactId="EBI-3862125">
        <id>Q9NZH6</id>
    </interactant>
    <interactant intactId="EBI-25900580">
        <id>Q9Y649</id>
    </interactant>
    <organismsDiffer>false</organismsDiffer>
    <experiments>3</experiments>
</comment>
<comment type="interaction">
    <interactant intactId="EBI-52374719">
        <id>Q9NZH6-1</id>
    </interactant>
    <interactant intactId="EBI-52374719">
        <id>Q9NZH6-1</id>
        <label>IL37</label>
    </interactant>
    <organismsDiffer>false</organismsDiffer>
    <experiments>4</experiments>
</comment>
<comment type="interaction">
    <interactant intactId="EBI-52374687">
        <id>PRO_0000015336</id>
    </interactant>
    <interactant intactId="EBI-52374687">
        <id>PRO_0000015336</id>
        <label>IL37</label>
        <dbReference type="UniProtKB" id="Q9NZH6"/>
    </interactant>
    <organismsDiffer>false</organismsDiffer>
    <experiments>4</experiments>
</comment>
<comment type="subcellular location">
    <subcellularLocation>
        <location evidence="4 5">Cytoplasm</location>
        <location evidence="4 5">Cytosol</location>
    </subcellularLocation>
    <subcellularLocation>
        <location evidence="4 5 7">Nucleus</location>
    </subcellularLocation>
    <subcellularLocation>
        <location evidence="2 4 6 7">Secreted</location>
    </subcellularLocation>
    <text evidence="4 5 6 7">Stimulation with IL1B leads to colocalization with SMAD3 mostly in perinuclear regions (PubMed:20935647, PubMed:33674380). Only the CASP1-cleaved mature form translocates into the nucleus upon LPS stimulation (PubMed:18390730). The secretion is dependent on protein unfolding and facilitated by the cargo receptor TMED10; it results in protein translocation from the cytoplasm into the ERGIC (endoplasmic reticulum-Golgi intermediate compartment) followed by vesicle entry and secretion (PubMed:32272059, PubMed:33674380).</text>
</comment>
<comment type="alternative products">
    <event type="alternative splicing"/>
    <isoform>
        <id>Q9NZH6-1</id>
        <name>B</name>
        <name>IL-1F7b</name>
        <name>IL-HLa</name>
        <sequence type="displayed"/>
    </isoform>
    <isoform>
        <id>Q9NZH6-2</id>
        <name>A</name>
        <sequence type="described" ref="VSP_002653"/>
    </isoform>
    <isoform>
        <id>Q9NZH6-3</id>
        <name>C</name>
        <name>IL-HS</name>
        <sequence type="described" ref="VSP_002656"/>
    </isoform>
    <isoform>
        <id>Q9NZH6-4</id>
        <name>D</name>
        <name>IL1F7d</name>
        <sequence type="described" ref="VSP_002654"/>
    </isoform>
    <isoform>
        <id>Q9NZH6-5</id>
        <name>E</name>
        <name>IL1F7e</name>
        <sequence type="described" ref="VSP_002655"/>
    </isoform>
</comment>
<comment type="tissue specificity">
    <text evidence="2 5">In general, low constitutive expression, if any, in healthy tissues; high expression in inflammatory counterparts, including in synovial tissues from individuals with active rheumatoid arthritis. Isoform A, isoform B and isoform C are expressed in testis, colon, placenta, lung and lymph node. Isoform D and isoform E were found only in testis and bone marrow. Whereas only isoform A is found in brain, only isoform B in kidney and only isoform C in heart.</text>
</comment>
<comment type="induction">
    <text evidence="4 5">Highly induced by bacterial lipopolysaccharides (LPS) and TGFB1, more moderately by IFNG, IL18, IL1B, TNF and the dinucleotide CpG (at protein level). Constitutive expression in bone marrow macrophages is down-regulated in the presence of IL4 and CSF2. Induced by phorbol myristate acetate (PMA) in different cell lines.</text>
</comment>
<comment type="PTM">
    <text>Proteolytically converted to the mature form by CASP1.</text>
</comment>
<comment type="disease" evidence="7">
    <disease id="DI-06149">
        <name>Inflammatory bowel disease 31, autosomal recessive</name>
        <acronym>IBD31</acronym>
        <description>A form of inflammatory bowel disease, a chronic, relapsing inflammation of the gastrointestinal tract with a complex etiology and a multifactorial inheritance pattern. It is subdivided into Crohn disease and ulcerative colitis phenotypes. Crohn disease may affect any part of the gastrointestinal tract from the mouth to the anus, but most frequently it involves the terminal ileum and colon. Bowel inflammation is transmural and discontinuous; it may contain granulomas or be associated with intestinal or perianal fistulas. In contrast, in ulcerative colitis, the inflammation is continuous and limited to rectal and colonic mucosal layers; fistulas and granulomas are not observed. Both diseases include extraintestinal inflammation of the skin, eyes, or joints. IBD31 patients suffer from infantile ulcerative colitis and present with recurrent bloody diarrhea with anemia and leukocytosis, extensive lymphoplasmocytic infiltration, cryptitis, and apoptotic crypt abcesses throughout the colon and rectum.</description>
        <dbReference type="MIM" id="619398"/>
    </disease>
    <text>The disease is caused by variants affecting the gene represented in this entry.</text>
</comment>
<comment type="miscellaneous">
    <molecule>Isoform B</molecule>
    <text evidence="14">The name IL-HL refers to isoform B containing polymorphisms Val-31 and Ala-42.</text>
</comment>
<comment type="similarity">
    <text evidence="13">Belongs to the IL-1 family.</text>
</comment>
<comment type="online information" name="Wikipedia">
    <link uri="https://en.wikipedia.org/wiki/Interleukin_1"/>
    <text>Interleukin-1 entry</text>
</comment>
<feature type="propeptide" id="PRO_0000015335" description="Removed in mature form" evidence="2">
    <location>
        <begin position="1"/>
        <end position="45"/>
    </location>
</feature>
<feature type="chain" id="PRO_0000015336" description="Interleukin-37">
    <location>
        <begin position="46"/>
        <end position="218"/>
    </location>
</feature>
<feature type="region of interest" description="Disordered" evidence="1">
    <location>
        <begin position="1"/>
        <end position="40"/>
    </location>
</feature>
<feature type="compositionally biased region" description="Basic and acidic residues" evidence="1">
    <location>
        <begin position="13"/>
        <end position="22"/>
    </location>
</feature>
<feature type="splice variant" id="VSP_002653" description="In isoform A." evidence="9">
    <original>MSFVGENSGVKMGSEDWEKDEPQCCLEDPAGSPLEPGPSLPTMNFVHTS</original>
    <variation>MSGCDRRETETKGKNSFKKRLRG</variation>
    <location>
        <begin position="1"/>
        <end position="49"/>
    </location>
</feature>
<feature type="splice variant" id="VSP_002655" description="In isoform E." evidence="11">
    <location>
        <begin position="28"/>
        <end position="88"/>
    </location>
</feature>
<feature type="splice variant" id="VSP_002654" description="In isoform D." evidence="11 12">
    <original>DPAGSPLEPGPSLPTMNFVHTS</original>
    <variation>G</variation>
    <location>
        <begin position="28"/>
        <end position="49"/>
    </location>
</feature>
<feature type="splice variant" id="VSP_002656" description="In isoform C." evidence="10">
    <original>SPKVKNLNPKKFSIHDQDHKVLVLDSGNLIAVPDKNYIRPE</original>
    <variation>K</variation>
    <location>
        <begin position="49"/>
        <end position="89"/>
    </location>
</feature>
<feature type="sequence variant" id="VAR_014260" description="In dbSNP:rs3811046." evidence="2 3 8">
    <original>G</original>
    <variation>V</variation>
    <location>
        <position position="31"/>
    </location>
</feature>
<feature type="sequence variant" id="VAR_014261" description="In dbSNP:rs3811047." evidence="2 3 8">
    <original>T</original>
    <variation>A</variation>
    <location>
        <position position="42"/>
    </location>
</feature>
<feature type="sequence variant" id="VAR_049574" description="In dbSNP:rs2708943.">
    <original>P</original>
    <variation>R</variation>
    <location>
        <position position="50"/>
    </location>
</feature>
<feature type="sequence variant" id="VAR_049575" description="In dbSNP:rs2723183.">
    <original>N</original>
    <variation>S</variation>
    <location>
        <position position="54"/>
    </location>
</feature>
<feature type="sequence variant" id="VAR_023334" description="In dbSNP:rs2723187." evidence="8">
    <original>P</original>
    <variation>L</variation>
    <location>
        <position position="108"/>
    </location>
</feature>
<feature type="sequence variant" id="VAR_023335" description="In dbSNP:rs28947200." evidence="8">
    <original>R</original>
    <variation>W</variation>
    <location>
        <position position="152"/>
    </location>
</feature>
<feature type="sequence variant" id="VAR_023336" description="In dbSNP:rs2708947." evidence="8">
    <original>W</original>
    <variation>R</variation>
    <location>
        <position position="164"/>
    </location>
</feature>
<feature type="sequence variant" id="VAR_086000" description="In IBD31; decreased stability; increased degradation; decreased localization to the nucleus; decreased localization to the extracellular space; decreased function in regulation of inflammatory response; dbSNP:rs750833867." evidence="7">
    <original>I</original>
    <variation>T</variation>
    <location>
        <position position="177"/>
    </location>
</feature>
<feature type="sequence variant" id="VAR_023337" description="In dbSNP:rs2723192." evidence="8">
    <original>D</original>
    <variation>N</variation>
    <location>
        <position position="218"/>
    </location>
</feature>
<feature type="strand" evidence="16">
    <location>
        <begin position="58"/>
        <end position="73"/>
    </location>
</feature>
<feature type="strand" evidence="16">
    <location>
        <begin position="76"/>
        <end position="81"/>
    </location>
</feature>
<feature type="strand" evidence="16">
    <location>
        <begin position="91"/>
        <end position="95"/>
    </location>
</feature>
<feature type="strand" evidence="17">
    <location>
        <begin position="103"/>
        <end position="105"/>
    </location>
</feature>
<feature type="strand" evidence="16">
    <location>
        <begin position="107"/>
        <end position="113"/>
    </location>
</feature>
<feature type="turn" evidence="16">
    <location>
        <begin position="114"/>
        <end position="117"/>
    </location>
</feature>
<feature type="strand" evidence="16">
    <location>
        <begin position="118"/>
        <end position="123"/>
    </location>
</feature>
<feature type="strand" evidence="17">
    <location>
        <begin position="128"/>
        <end position="130"/>
    </location>
</feature>
<feature type="strand" evidence="16">
    <location>
        <begin position="132"/>
        <end position="137"/>
    </location>
</feature>
<feature type="helix" evidence="16">
    <location>
        <begin position="140"/>
        <end position="144"/>
    </location>
</feature>
<feature type="helix" evidence="16">
    <location>
        <begin position="148"/>
        <end position="151"/>
    </location>
</feature>
<feature type="helix" evidence="16">
    <location>
        <begin position="152"/>
        <end position="154"/>
    </location>
</feature>
<feature type="strand" evidence="16">
    <location>
        <begin position="156"/>
        <end position="161"/>
    </location>
</feature>
<feature type="strand" evidence="16">
    <location>
        <begin position="164"/>
        <end position="172"/>
    </location>
</feature>
<feature type="strand" evidence="16">
    <location>
        <begin position="176"/>
        <end position="178"/>
    </location>
</feature>
<feature type="strand" evidence="16">
    <location>
        <begin position="181"/>
        <end position="186"/>
    </location>
</feature>
<feature type="strand" evidence="16">
    <location>
        <begin position="188"/>
        <end position="191"/>
    </location>
</feature>
<feature type="helix" evidence="16">
    <location>
        <begin position="196"/>
        <end position="198"/>
    </location>
</feature>
<feature type="strand" evidence="16">
    <location>
        <begin position="201"/>
        <end position="205"/>
    </location>
</feature>
<proteinExistence type="evidence at protein level"/>
<keyword id="KW-0002">3D-structure</keyword>
<keyword id="KW-0025">Alternative splicing</keyword>
<keyword id="KW-0202">Cytokine</keyword>
<keyword id="KW-0963">Cytoplasm</keyword>
<keyword id="KW-0903">Direct protein sequencing</keyword>
<keyword id="KW-0225">Disease variant</keyword>
<keyword id="KW-0539">Nucleus</keyword>
<keyword id="KW-1267">Proteomics identification</keyword>
<keyword id="KW-1185">Reference proteome</keyword>
<keyword id="KW-0964">Secreted</keyword>
<protein>
    <recommendedName>
        <fullName>Interleukin-37</fullName>
        <shortName>IL-37</shortName>
    </recommendedName>
    <alternativeName>
        <fullName>FIL1 zeta</fullName>
    </alternativeName>
    <alternativeName>
        <fullName>IL-1X</fullName>
    </alternativeName>
    <alternativeName>
        <fullName>Interleukin-1 family member 7</fullName>
        <shortName>IL-1F7</shortName>
    </alternativeName>
    <alternativeName>
        <fullName>Interleukin-1 homolog 4</fullName>
        <shortName>IL-1H</shortName>
        <shortName>IL-1H4</shortName>
    </alternativeName>
    <alternativeName>
        <fullName>Interleukin-1 zeta</fullName>
        <shortName>IL-1 zeta</shortName>
    </alternativeName>
    <alternativeName>
        <fullName>Interleukin-1-related protein</fullName>
        <shortName>IL-1RP1</shortName>
    </alternativeName>
</protein>
<reference key="1">
    <citation type="journal article" date="2000" name="J. Biol. Chem.">
        <title>Identification and initial characterization of four novel members of the interleukin-1 family.</title>
        <authorList>
            <person name="Kumar S."/>
            <person name="McDonnell P.C."/>
            <person name="Lehr R."/>
            <person name="Tierney L."/>
            <person name="Tzimas M.N."/>
            <person name="Griswold D.E."/>
            <person name="Capper E.A."/>
            <person name="Tal-Singer R."/>
            <person name="Wells G.I."/>
            <person name="Doyle M.L."/>
            <person name="Young P.R."/>
        </authorList>
    </citation>
    <scope>NUCLEOTIDE SEQUENCE [MRNA] (ISOFORM B)</scope>
    <source>
        <tissue>Fetal B-cell</tissue>
        <tissue>Fetal colon</tissue>
        <tissue>Fetal lung</tissue>
        <tissue>Fetal testis</tissue>
    </source>
</reference>
<reference key="2">
    <citation type="submission" date="1999-07" db="EMBL/GenBank/DDBJ databases">
        <authorList>
            <person name="Manoj P.P."/>
            <person name="Mantovani A."/>
            <person name="Muzio M."/>
        </authorList>
    </citation>
    <scope>NUCLEOTIDE SEQUENCE [MRNA] (ISOFORM B)</scope>
    <source>
        <tissue>Colon carcinoma</tissue>
    </source>
</reference>
<reference key="3">
    <citation type="journal article" date="2001" name="Cytokine">
        <title>IL-1H, an interleukin 1-related protein that binds IL-18 receptor/IL-1Rrp.</title>
        <authorList>
            <person name="Pan G."/>
            <person name="Risser P."/>
            <person name="Mao W."/>
            <person name="Baldwin D.T."/>
            <person name="Zhong A.W."/>
            <person name="Filvaroff E."/>
            <person name="Yansura D."/>
            <person name="Lewis L."/>
            <person name="Eigenbrot C."/>
            <person name="Henzel W.J."/>
            <person name="Vandlen R."/>
        </authorList>
    </citation>
    <scope>NUCLEOTIDE SEQUENCE [MRNA] (ISOFORMS B AND C)</scope>
    <scope>PROTEIN SEQUENCE OF 46-54</scope>
    <scope>INTERACTION WITH IL18R1</scope>
    <scope>SUBCELLULAR LOCATION</scope>
    <scope>TISSUE SPECIFICITY</scope>
    <scope>VARIANTS VAL-31 AND ALA-42</scope>
</reference>
<reference key="4">
    <citation type="journal article" date="2000" name="J. Biol. Chem.">
        <title>Four new members expand the IL-1 superfamily.</title>
        <authorList>
            <person name="Smith D.E."/>
            <person name="Renshaw B.R."/>
            <person name="Ketchem R.R."/>
            <person name="Kubin M."/>
            <person name="Garka K.E."/>
            <person name="Sims J.E."/>
        </authorList>
    </citation>
    <scope>NUCLEOTIDE SEQUENCE [MRNA] (ISOFORM A)</scope>
</reference>
<reference key="5">
    <citation type="journal article" date="2002" name="Genomics">
        <title>Genomic organization of the interleukin-1 locus.</title>
        <authorList>
            <person name="Taylor S.L."/>
            <person name="Renshaw B.R."/>
            <person name="Garka K.E."/>
            <person name="Smith D.E."/>
            <person name="Sims J.E."/>
        </authorList>
    </citation>
    <scope>NUCLEOTIDE SEQUENCE [MRNA] (ISOFORMS D AND E)</scope>
</reference>
<reference key="6">
    <citation type="submission" date="2005-03" db="EMBL/GenBank/DDBJ databases">
        <authorList>
            <consortium name="SeattleSNPs variation discovery resource"/>
        </authorList>
    </citation>
    <scope>NUCLEOTIDE SEQUENCE [GENOMIC DNA]</scope>
    <scope>VARIANTS VAL-31; ALA-42; LEU-108; TRP-152; ARG-164 AND ASN-218</scope>
</reference>
<reference key="7">
    <citation type="journal article" date="2008" name="Nat. Methods">
        <title>Human protein factory for converting the transcriptome into an in vitro-expressed proteome.</title>
        <authorList>
            <person name="Goshima N."/>
            <person name="Kawamura Y."/>
            <person name="Fukumoto A."/>
            <person name="Miura A."/>
            <person name="Honma R."/>
            <person name="Satoh R."/>
            <person name="Wakamatsu A."/>
            <person name="Yamamoto J."/>
            <person name="Kimura K."/>
            <person name="Nishikawa T."/>
            <person name="Andoh T."/>
            <person name="Iida Y."/>
            <person name="Ishikawa K."/>
            <person name="Ito E."/>
            <person name="Kagawa N."/>
            <person name="Kaminaga C."/>
            <person name="Kanehori K."/>
            <person name="Kawakami B."/>
            <person name="Kenmochi K."/>
            <person name="Kimura R."/>
            <person name="Kobayashi M."/>
            <person name="Kuroita T."/>
            <person name="Kuwayama H."/>
            <person name="Maruyama Y."/>
            <person name="Matsuo K."/>
            <person name="Minami K."/>
            <person name="Mitsubori M."/>
            <person name="Mori M."/>
            <person name="Morishita R."/>
            <person name="Murase A."/>
            <person name="Nishikawa A."/>
            <person name="Nishikawa S."/>
            <person name="Okamoto T."/>
            <person name="Sakagami N."/>
            <person name="Sakamoto Y."/>
            <person name="Sasaki Y."/>
            <person name="Seki T."/>
            <person name="Sono S."/>
            <person name="Sugiyama A."/>
            <person name="Sumiya T."/>
            <person name="Takayama T."/>
            <person name="Takayama Y."/>
            <person name="Takeda H."/>
            <person name="Togashi T."/>
            <person name="Yahata K."/>
            <person name="Yamada H."/>
            <person name="Yanagisawa Y."/>
            <person name="Endo Y."/>
            <person name="Imamoto F."/>
            <person name="Kisu Y."/>
            <person name="Tanaka S."/>
            <person name="Isogai T."/>
            <person name="Imai J."/>
            <person name="Watanabe S."/>
            <person name="Nomura N."/>
        </authorList>
    </citation>
    <scope>NUCLEOTIDE SEQUENCE [LARGE SCALE MRNA] (ISOFORM D)</scope>
</reference>
<reference key="8">
    <citation type="journal article" date="2005" name="Nature">
        <title>Generation and annotation of the DNA sequences of human chromosomes 2 and 4.</title>
        <authorList>
            <person name="Hillier L.W."/>
            <person name="Graves T.A."/>
            <person name="Fulton R.S."/>
            <person name="Fulton L.A."/>
            <person name="Pepin K.H."/>
            <person name="Minx P."/>
            <person name="Wagner-McPherson C."/>
            <person name="Layman D."/>
            <person name="Wylie K."/>
            <person name="Sekhon M."/>
            <person name="Becker M.C."/>
            <person name="Fewell G.A."/>
            <person name="Delehaunty K.D."/>
            <person name="Miner T.L."/>
            <person name="Nash W.E."/>
            <person name="Kremitzki C."/>
            <person name="Oddy L."/>
            <person name="Du H."/>
            <person name="Sun H."/>
            <person name="Bradshaw-Cordum H."/>
            <person name="Ali J."/>
            <person name="Carter J."/>
            <person name="Cordes M."/>
            <person name="Harris A."/>
            <person name="Isak A."/>
            <person name="van Brunt A."/>
            <person name="Nguyen C."/>
            <person name="Du F."/>
            <person name="Courtney L."/>
            <person name="Kalicki J."/>
            <person name="Ozersky P."/>
            <person name="Abbott S."/>
            <person name="Armstrong J."/>
            <person name="Belter E.A."/>
            <person name="Caruso L."/>
            <person name="Cedroni M."/>
            <person name="Cotton M."/>
            <person name="Davidson T."/>
            <person name="Desai A."/>
            <person name="Elliott G."/>
            <person name="Erb T."/>
            <person name="Fronick C."/>
            <person name="Gaige T."/>
            <person name="Haakenson W."/>
            <person name="Haglund K."/>
            <person name="Holmes A."/>
            <person name="Harkins R."/>
            <person name="Kim K."/>
            <person name="Kruchowski S.S."/>
            <person name="Strong C.M."/>
            <person name="Grewal N."/>
            <person name="Goyea E."/>
            <person name="Hou S."/>
            <person name="Levy A."/>
            <person name="Martinka S."/>
            <person name="Mead K."/>
            <person name="McLellan M.D."/>
            <person name="Meyer R."/>
            <person name="Randall-Maher J."/>
            <person name="Tomlinson C."/>
            <person name="Dauphin-Kohlberg S."/>
            <person name="Kozlowicz-Reilly A."/>
            <person name="Shah N."/>
            <person name="Swearengen-Shahid S."/>
            <person name="Snider J."/>
            <person name="Strong J.T."/>
            <person name="Thompson J."/>
            <person name="Yoakum M."/>
            <person name="Leonard S."/>
            <person name="Pearman C."/>
            <person name="Trani L."/>
            <person name="Radionenko M."/>
            <person name="Waligorski J.E."/>
            <person name="Wang C."/>
            <person name="Rock S.M."/>
            <person name="Tin-Wollam A.-M."/>
            <person name="Maupin R."/>
            <person name="Latreille P."/>
            <person name="Wendl M.C."/>
            <person name="Yang S.-P."/>
            <person name="Pohl C."/>
            <person name="Wallis J.W."/>
            <person name="Spieth J."/>
            <person name="Bieri T.A."/>
            <person name="Berkowicz N."/>
            <person name="Nelson J.O."/>
            <person name="Osborne J."/>
            <person name="Ding L."/>
            <person name="Meyer R."/>
            <person name="Sabo A."/>
            <person name="Shotland Y."/>
            <person name="Sinha P."/>
            <person name="Wohldmann P.E."/>
            <person name="Cook L.L."/>
            <person name="Hickenbotham M.T."/>
            <person name="Eldred J."/>
            <person name="Williams D."/>
            <person name="Jones T.A."/>
            <person name="She X."/>
            <person name="Ciccarelli F.D."/>
            <person name="Izaurralde E."/>
            <person name="Taylor J."/>
            <person name="Schmutz J."/>
            <person name="Myers R.M."/>
            <person name="Cox D.R."/>
            <person name="Huang X."/>
            <person name="McPherson J.D."/>
            <person name="Mardis E.R."/>
            <person name="Clifton S.W."/>
            <person name="Warren W.C."/>
            <person name="Chinwalla A.T."/>
            <person name="Eddy S.R."/>
            <person name="Marra M.A."/>
            <person name="Ovcharenko I."/>
            <person name="Furey T.S."/>
            <person name="Miller W."/>
            <person name="Eichler E.E."/>
            <person name="Bork P."/>
            <person name="Suyama M."/>
            <person name="Torrents D."/>
            <person name="Waterston R.H."/>
            <person name="Wilson R.K."/>
        </authorList>
    </citation>
    <scope>NUCLEOTIDE SEQUENCE [LARGE SCALE GENOMIC DNA]</scope>
</reference>
<reference key="9">
    <citation type="submission" date="2005-07" db="EMBL/GenBank/DDBJ databases">
        <authorList>
            <person name="Mural R.J."/>
            <person name="Istrail S."/>
            <person name="Sutton G.G."/>
            <person name="Florea L."/>
            <person name="Halpern A.L."/>
            <person name="Mobarry C.M."/>
            <person name="Lippert R."/>
            <person name="Walenz B."/>
            <person name="Shatkay H."/>
            <person name="Dew I."/>
            <person name="Miller J.R."/>
            <person name="Flanigan M.J."/>
            <person name="Edwards N.J."/>
            <person name="Bolanos R."/>
            <person name="Fasulo D."/>
            <person name="Halldorsson B.V."/>
            <person name="Hannenhalli S."/>
            <person name="Turner R."/>
            <person name="Yooseph S."/>
            <person name="Lu F."/>
            <person name="Nusskern D.R."/>
            <person name="Shue B.C."/>
            <person name="Zheng X.H."/>
            <person name="Zhong F."/>
            <person name="Delcher A.L."/>
            <person name="Huson D.H."/>
            <person name="Kravitz S.A."/>
            <person name="Mouchard L."/>
            <person name="Reinert K."/>
            <person name="Remington K.A."/>
            <person name="Clark A.G."/>
            <person name="Waterman M.S."/>
            <person name="Eichler E.E."/>
            <person name="Adams M.D."/>
            <person name="Hunkapiller M.W."/>
            <person name="Myers E.W."/>
            <person name="Venter J.C."/>
        </authorList>
    </citation>
    <scope>NUCLEOTIDE SEQUENCE [LARGE SCALE GENOMIC DNA]</scope>
</reference>
<reference key="10">
    <citation type="journal article" date="2004" name="Genome Res.">
        <title>The status, quality, and expansion of the NIH full-length cDNA project: the Mammalian Gene Collection (MGC).</title>
        <authorList>
            <consortium name="The MGC Project Team"/>
        </authorList>
    </citation>
    <scope>NUCLEOTIDE SEQUENCE [LARGE SCALE MRNA] (ISOFORM B)</scope>
    <scope>VARIANTS VAL-31 AND ALA-42</scope>
    <source>
        <tissue>Placenta</tissue>
    </source>
</reference>
<reference key="11">
    <citation type="journal article" date="2008" name="J. Immunol.">
        <title>The IL-1 family member 7b translocates to the nucleus and down-regulates proinflammatory cytokines.</title>
        <authorList>
            <person name="Sharma S."/>
            <person name="Kulk N."/>
            <person name="Nold M.F."/>
            <person name="Graf R."/>
            <person name="Kim S.H."/>
            <person name="Reinhardt D."/>
            <person name="Dinarello C.A."/>
            <person name="Bufler P."/>
        </authorList>
    </citation>
    <scope>FUNCTION</scope>
    <scope>SUBCELLULAR LOCATION</scope>
    <scope>MATURATION BY CASP1</scope>
    <scope>INDUCTION</scope>
</reference>
<reference key="12">
    <citation type="journal article" date="2010" name="Nat. Immunol.">
        <title>IL-37 is a fundamental inhibitor of innate immunity.</title>
        <authorList>
            <person name="Nold M.F."/>
            <person name="Nold-Petry C.A."/>
            <person name="Zepp J.A."/>
            <person name="Palmer B.E."/>
            <person name="Bufler P."/>
            <person name="Dinarello C.A."/>
        </authorList>
    </citation>
    <scope>FUNCTION</scope>
    <scope>INTERACTION WITH SMAD3</scope>
    <scope>SUBCELLULAR LOCATION</scope>
    <scope>TISSUE SPECIFICITY</scope>
    <scope>INDUCTION</scope>
</reference>
<reference key="13">
    <citation type="journal article" date="2020" name="Cell">
        <title>A Translocation Pathway for Vesicle-Mediated Unconventional Protein Secretion.</title>
        <authorList>
            <person name="Zhang M."/>
            <person name="Liu L."/>
            <person name="Lin X."/>
            <person name="Wang Y."/>
            <person name="Li Y."/>
            <person name="Guo Q."/>
            <person name="Li S."/>
            <person name="Sun Y."/>
            <person name="Tao X."/>
            <person name="Zhang D."/>
            <person name="Lv X."/>
            <person name="Zheng L."/>
            <person name="Ge L."/>
        </authorList>
    </citation>
    <scope>SUBCELLULAR LOCATION</scope>
    <scope>INTERACTION WITH TMED10</scope>
</reference>
<reference key="14">
    <citation type="journal article" date="2021" name="Proc. Natl. Acad. Sci. U.S.A.">
        <title>Homozygous IL37 mutation associated with infantile inflammatory bowel disease.</title>
        <authorList>
            <person name="Zhang Z.Z."/>
            <person name="Zhang Y."/>
            <person name="He T."/>
            <person name="Sweeney C.L."/>
            <person name="Baris S."/>
            <person name="Karakoc-Aydiner E."/>
            <person name="Yao Y."/>
            <person name="Ertem D."/>
            <person name="Matthews H.F."/>
            <person name="Gonzaga-Jauregui C."/>
            <person name="Malech H.L."/>
            <person name="Su H.C."/>
            <person name="Ozen A."/>
            <person name="Smith K.G.C."/>
            <person name="Lenardo M.J."/>
        </authorList>
    </citation>
    <scope>INVOLVEMENT IN IBD31</scope>
    <scope>VARIANT IBD31 THR-177</scope>
    <scope>CHARACTERIZATION OF VARIANT IBD31 THR-177</scope>
    <scope>FUNCTION</scope>
    <scope>SUBCELLULAR LOCATION</scope>
</reference>
<accession>Q9NZH6</accession>
<accession>B5BU97</accession>
<accession>Q56AP9</accession>
<accession>Q8TD04</accession>
<accession>Q8TD05</accession>
<accession>Q9HBF2</accession>
<accession>Q9HBF3</accession>
<accession>Q9UHA6</accession>
<organism>
    <name type="scientific">Homo sapiens</name>
    <name type="common">Human</name>
    <dbReference type="NCBI Taxonomy" id="9606"/>
    <lineage>
        <taxon>Eukaryota</taxon>
        <taxon>Metazoa</taxon>
        <taxon>Chordata</taxon>
        <taxon>Craniata</taxon>
        <taxon>Vertebrata</taxon>
        <taxon>Euteleostomi</taxon>
        <taxon>Mammalia</taxon>
        <taxon>Eutheria</taxon>
        <taxon>Euarchontoglires</taxon>
        <taxon>Primates</taxon>
        <taxon>Haplorrhini</taxon>
        <taxon>Catarrhini</taxon>
        <taxon>Hominidae</taxon>
        <taxon>Homo</taxon>
    </lineage>
</organism>
<gene>
    <name evidence="15" type="primary">IL37</name>
    <name type="synonym">FIL1Z</name>
    <name type="synonym">IL1F7</name>
    <name type="synonym">IL1H4</name>
    <name type="synonym">IL1RP1</name>
</gene>
<sequence length="218" mass="24126">MSFVGENSGVKMGSEDWEKDEPQCCLEDPAGSPLEPGPSLPTMNFVHTSPKVKNLNPKKFSIHDQDHKVLVLDSGNLIAVPDKNYIRPEIFFALASSLSSASAEKGSPILLGVSKGEFCLYCDKDKGQSHPSLQLKKEKLMKLAAQKESARRPFIFYRAQVGSWNMLESAAHPGWFICTSCNCNEPVGVTDKFENRKHIEFSFQPVCKAEMSPSEVSD</sequence>